<sequence length="206" mass="22207">MSFLSIFTFFSVLISVARAVRFDLTNVTCKGLHGPHCGTYVMEVVGQNGTFLGQSTFVGADVLTESAGDAWARYLGQETRFLPKLTTIASNETKNFSPLIFTTNINTCNPQSIGDAMVPFANTVTGEIEYNSWADTADNASFITGLANQLFNSTDYGVQVASCYPNFASVILSTPTVNIFGKDDTLPDYCTAIQLKAVCPPEAGFD</sequence>
<keyword id="KW-0963">Cytoplasm</keyword>
<keyword id="KW-0732">Signal</keyword>
<keyword id="KW-0862">Zinc</keyword>
<organism>
    <name type="scientific">Saccharomyces cerevisiae (strain YJM789)</name>
    <name type="common">Baker's yeast</name>
    <dbReference type="NCBI Taxonomy" id="307796"/>
    <lineage>
        <taxon>Eukaryota</taxon>
        <taxon>Fungi</taxon>
        <taxon>Dikarya</taxon>
        <taxon>Ascomycota</taxon>
        <taxon>Saccharomycotina</taxon>
        <taxon>Saccharomycetes</taxon>
        <taxon>Saccharomycetales</taxon>
        <taxon>Saccharomycetaceae</taxon>
        <taxon>Saccharomyces</taxon>
    </lineage>
</organism>
<proteinExistence type="inferred from homology"/>
<accession>A6ZTT3</accession>
<protein>
    <recommendedName>
        <fullName>Protein VEL1</fullName>
    </recommendedName>
    <alternativeName>
        <fullName>Velum formation protein 1</fullName>
    </alternativeName>
</protein>
<evidence type="ECO:0000250" key="1"/>
<evidence type="ECO:0000255" key="2"/>
<evidence type="ECO:0000305" key="3"/>
<gene>
    <name type="primary">VEL1</name>
    <name type="ORF">SCY_1816</name>
</gene>
<comment type="subcellular location">
    <subcellularLocation>
        <location evidence="1">Cytoplasm</location>
        <location evidence="1">Cytosol</location>
    </subcellularLocation>
    <text evidence="1">Intracellular soluble fraction.</text>
</comment>
<comment type="induction">
    <text evidence="1">In zinc-depleted conditions and has increased expression in NAP1 deletion mutants.</text>
</comment>
<comment type="similarity">
    <text evidence="3">Belongs to the VEL1 family.</text>
</comment>
<dbReference type="EMBL" id="AAFW02000099">
    <property type="protein sequence ID" value="EDN61871.1"/>
    <property type="molecule type" value="Genomic_DNA"/>
</dbReference>
<dbReference type="HOGENOM" id="CLU_1349595_0_0_1"/>
<dbReference type="Proteomes" id="UP000007060">
    <property type="component" value="Unassembled WGS sequence"/>
</dbReference>
<dbReference type="GO" id="GO:0005829">
    <property type="term" value="C:cytosol"/>
    <property type="evidence" value="ECO:0007669"/>
    <property type="project" value="UniProtKB-SubCell"/>
</dbReference>
<dbReference type="InterPro" id="IPR019435">
    <property type="entry name" value="Vel1-like"/>
</dbReference>
<dbReference type="Pfam" id="PF10339">
    <property type="entry name" value="Vel1p"/>
    <property type="match status" value="1"/>
</dbReference>
<name>VEL1_YEAS7</name>
<reference key="1">
    <citation type="journal article" date="2007" name="Proc. Natl. Acad. Sci. U.S.A.">
        <title>Genome sequencing and comparative analysis of Saccharomyces cerevisiae strain YJM789.</title>
        <authorList>
            <person name="Wei W."/>
            <person name="McCusker J.H."/>
            <person name="Hyman R.W."/>
            <person name="Jones T."/>
            <person name="Ning Y."/>
            <person name="Cao Z."/>
            <person name="Gu Z."/>
            <person name="Bruno D."/>
            <person name="Miranda M."/>
            <person name="Nguyen M."/>
            <person name="Wilhelmy J."/>
            <person name="Komp C."/>
            <person name="Tamse R."/>
            <person name="Wang X."/>
            <person name="Jia P."/>
            <person name="Luedi P."/>
            <person name="Oefner P.J."/>
            <person name="David L."/>
            <person name="Dietrich F.S."/>
            <person name="Li Y."/>
            <person name="Davis R.W."/>
            <person name="Steinmetz L.M."/>
        </authorList>
    </citation>
    <scope>NUCLEOTIDE SEQUENCE [LARGE SCALE GENOMIC DNA]</scope>
    <source>
        <strain>YJM789</strain>
    </source>
</reference>
<feature type="signal peptide" evidence="2">
    <location>
        <begin position="1"/>
        <end position="19"/>
    </location>
</feature>
<feature type="chain" id="PRO_0000326041" description="Protein VEL1">
    <location>
        <begin position="20"/>
        <end position="206"/>
    </location>
</feature>